<organism>
    <name type="scientific">Methylorubrum populi (strain ATCC BAA-705 / NCIMB 13946 / BJ001)</name>
    <name type="common">Methylobacterium populi</name>
    <dbReference type="NCBI Taxonomy" id="441620"/>
    <lineage>
        <taxon>Bacteria</taxon>
        <taxon>Pseudomonadati</taxon>
        <taxon>Pseudomonadota</taxon>
        <taxon>Alphaproteobacteria</taxon>
        <taxon>Hyphomicrobiales</taxon>
        <taxon>Methylobacteriaceae</taxon>
        <taxon>Methylorubrum</taxon>
    </lineage>
</organism>
<reference key="1">
    <citation type="submission" date="2008-04" db="EMBL/GenBank/DDBJ databases">
        <title>Complete sequence of chromosome of Methylobacterium populi BJ001.</title>
        <authorList>
            <consortium name="US DOE Joint Genome Institute"/>
            <person name="Copeland A."/>
            <person name="Lucas S."/>
            <person name="Lapidus A."/>
            <person name="Glavina del Rio T."/>
            <person name="Dalin E."/>
            <person name="Tice H."/>
            <person name="Bruce D."/>
            <person name="Goodwin L."/>
            <person name="Pitluck S."/>
            <person name="Chertkov O."/>
            <person name="Brettin T."/>
            <person name="Detter J.C."/>
            <person name="Han C."/>
            <person name="Kuske C.R."/>
            <person name="Schmutz J."/>
            <person name="Larimer F."/>
            <person name="Land M."/>
            <person name="Hauser L."/>
            <person name="Kyrpides N."/>
            <person name="Mikhailova N."/>
            <person name="Marx C."/>
            <person name="Richardson P."/>
        </authorList>
    </citation>
    <scope>NUCLEOTIDE SEQUENCE [LARGE SCALE GENOMIC DNA]</scope>
    <source>
        <strain>ATCC BAA-705 / NCIMB 13946 / BJ001</strain>
    </source>
</reference>
<accession>B1ZGB4</accession>
<sequence length="121" mass="13627">MARVKRGVTSHAKHKKVLKAAKGYYGRRKNTIRIAKQAVEKGLQYAYRDRKNKKRTFRALWIQRLNAAVREHGLTYSRFINALAKSGIEVDRKALSELAIHEPAAFAAVVEKAKSALPKAA</sequence>
<comment type="function">
    <text evidence="1">Binds directly to 23S ribosomal RNA and is necessary for the in vitro assembly process of the 50S ribosomal subunit. It is not involved in the protein synthesizing functions of that subunit.</text>
</comment>
<comment type="similarity">
    <text evidence="1">Belongs to the bacterial ribosomal protein bL20 family.</text>
</comment>
<name>RL20_METPB</name>
<evidence type="ECO:0000255" key="1">
    <source>
        <dbReference type="HAMAP-Rule" id="MF_00382"/>
    </source>
</evidence>
<evidence type="ECO:0000305" key="2"/>
<protein>
    <recommendedName>
        <fullName evidence="1">Large ribosomal subunit protein bL20</fullName>
    </recommendedName>
    <alternativeName>
        <fullName evidence="2">50S ribosomal protein L20</fullName>
    </alternativeName>
</protein>
<proteinExistence type="inferred from homology"/>
<gene>
    <name evidence="1" type="primary">rplT</name>
    <name type="ordered locus">Mpop_1608</name>
</gene>
<dbReference type="EMBL" id="CP001029">
    <property type="protein sequence ID" value="ACB79772.1"/>
    <property type="molecule type" value="Genomic_DNA"/>
</dbReference>
<dbReference type="RefSeq" id="WP_012453520.1">
    <property type="nucleotide sequence ID" value="NC_010725.1"/>
</dbReference>
<dbReference type="SMR" id="B1ZGB4"/>
<dbReference type="STRING" id="441620.Mpop_1608"/>
<dbReference type="KEGG" id="mpo:Mpop_1608"/>
<dbReference type="eggNOG" id="COG0292">
    <property type="taxonomic scope" value="Bacteria"/>
</dbReference>
<dbReference type="HOGENOM" id="CLU_123265_0_1_5"/>
<dbReference type="OrthoDB" id="9808966at2"/>
<dbReference type="Proteomes" id="UP000007136">
    <property type="component" value="Chromosome"/>
</dbReference>
<dbReference type="GO" id="GO:1990904">
    <property type="term" value="C:ribonucleoprotein complex"/>
    <property type="evidence" value="ECO:0007669"/>
    <property type="project" value="UniProtKB-KW"/>
</dbReference>
<dbReference type="GO" id="GO:0005840">
    <property type="term" value="C:ribosome"/>
    <property type="evidence" value="ECO:0007669"/>
    <property type="project" value="UniProtKB-KW"/>
</dbReference>
<dbReference type="GO" id="GO:0019843">
    <property type="term" value="F:rRNA binding"/>
    <property type="evidence" value="ECO:0007669"/>
    <property type="project" value="UniProtKB-UniRule"/>
</dbReference>
<dbReference type="GO" id="GO:0003735">
    <property type="term" value="F:structural constituent of ribosome"/>
    <property type="evidence" value="ECO:0007669"/>
    <property type="project" value="InterPro"/>
</dbReference>
<dbReference type="GO" id="GO:0000027">
    <property type="term" value="P:ribosomal large subunit assembly"/>
    <property type="evidence" value="ECO:0007669"/>
    <property type="project" value="UniProtKB-UniRule"/>
</dbReference>
<dbReference type="GO" id="GO:0006412">
    <property type="term" value="P:translation"/>
    <property type="evidence" value="ECO:0007669"/>
    <property type="project" value="InterPro"/>
</dbReference>
<dbReference type="CDD" id="cd07026">
    <property type="entry name" value="Ribosomal_L20"/>
    <property type="match status" value="1"/>
</dbReference>
<dbReference type="FunFam" id="1.10.1900.20:FF:000001">
    <property type="entry name" value="50S ribosomal protein L20"/>
    <property type="match status" value="1"/>
</dbReference>
<dbReference type="Gene3D" id="6.10.160.10">
    <property type="match status" value="1"/>
</dbReference>
<dbReference type="Gene3D" id="1.10.1900.20">
    <property type="entry name" value="Ribosomal protein L20"/>
    <property type="match status" value="1"/>
</dbReference>
<dbReference type="HAMAP" id="MF_00382">
    <property type="entry name" value="Ribosomal_bL20"/>
    <property type="match status" value="1"/>
</dbReference>
<dbReference type="InterPro" id="IPR005813">
    <property type="entry name" value="Ribosomal_bL20"/>
</dbReference>
<dbReference type="InterPro" id="IPR049946">
    <property type="entry name" value="RIBOSOMAL_L20_CS"/>
</dbReference>
<dbReference type="InterPro" id="IPR035566">
    <property type="entry name" value="Ribosomal_protein_bL20_C"/>
</dbReference>
<dbReference type="NCBIfam" id="TIGR01032">
    <property type="entry name" value="rplT_bact"/>
    <property type="match status" value="1"/>
</dbReference>
<dbReference type="PANTHER" id="PTHR10986">
    <property type="entry name" value="39S RIBOSOMAL PROTEIN L20"/>
    <property type="match status" value="1"/>
</dbReference>
<dbReference type="Pfam" id="PF00453">
    <property type="entry name" value="Ribosomal_L20"/>
    <property type="match status" value="1"/>
</dbReference>
<dbReference type="PRINTS" id="PR00062">
    <property type="entry name" value="RIBOSOMALL20"/>
</dbReference>
<dbReference type="SUPFAM" id="SSF74731">
    <property type="entry name" value="Ribosomal protein L20"/>
    <property type="match status" value="1"/>
</dbReference>
<dbReference type="PROSITE" id="PS00937">
    <property type="entry name" value="RIBOSOMAL_L20"/>
    <property type="match status" value="1"/>
</dbReference>
<feature type="chain" id="PRO_1000122337" description="Large ribosomal subunit protein bL20">
    <location>
        <begin position="1"/>
        <end position="121"/>
    </location>
</feature>
<keyword id="KW-0687">Ribonucleoprotein</keyword>
<keyword id="KW-0689">Ribosomal protein</keyword>
<keyword id="KW-0694">RNA-binding</keyword>
<keyword id="KW-0699">rRNA-binding</keyword>